<organism>
    <name type="scientific">Salmonella choleraesuis (strain SC-B67)</name>
    <dbReference type="NCBI Taxonomy" id="321314"/>
    <lineage>
        <taxon>Bacteria</taxon>
        <taxon>Pseudomonadati</taxon>
        <taxon>Pseudomonadota</taxon>
        <taxon>Gammaproteobacteria</taxon>
        <taxon>Enterobacterales</taxon>
        <taxon>Enterobacteriaceae</taxon>
        <taxon>Salmonella</taxon>
    </lineage>
</organism>
<reference key="1">
    <citation type="journal article" date="2005" name="Nucleic Acids Res.">
        <title>The genome sequence of Salmonella enterica serovar Choleraesuis, a highly invasive and resistant zoonotic pathogen.</title>
        <authorList>
            <person name="Chiu C.-H."/>
            <person name="Tang P."/>
            <person name="Chu C."/>
            <person name="Hu S."/>
            <person name="Bao Q."/>
            <person name="Yu J."/>
            <person name="Chou Y.-Y."/>
            <person name="Wang H.-S."/>
            <person name="Lee Y.-S."/>
        </authorList>
    </citation>
    <scope>NUCLEOTIDE SEQUENCE [LARGE SCALE GENOMIC DNA]</scope>
    <source>
        <strain>SC-B67</strain>
    </source>
</reference>
<keyword id="KW-0064">Aspartyl protease</keyword>
<keyword id="KW-0997">Cell inner membrane</keyword>
<keyword id="KW-1003">Cell membrane</keyword>
<keyword id="KW-0378">Hydrolase</keyword>
<keyword id="KW-0472">Membrane</keyword>
<keyword id="KW-0645">Protease</keyword>
<keyword id="KW-0812">Transmembrane</keyword>
<keyword id="KW-1133">Transmembrane helix</keyword>
<accession>Q57TL4</accession>
<proteinExistence type="inferred from homology"/>
<gene>
    <name evidence="1" type="primary">lspA</name>
    <name type="ordered locus">SCH_0041</name>
</gene>
<evidence type="ECO:0000255" key="1">
    <source>
        <dbReference type="HAMAP-Rule" id="MF_00161"/>
    </source>
</evidence>
<protein>
    <recommendedName>
        <fullName evidence="1">Lipoprotein signal peptidase</fullName>
        <ecNumber evidence="1">3.4.23.36</ecNumber>
    </recommendedName>
    <alternativeName>
        <fullName evidence="1">Prolipoprotein signal peptidase</fullName>
    </alternativeName>
    <alternativeName>
        <fullName evidence="1">Signal peptidase II</fullName>
        <shortName evidence="1">SPase II</shortName>
    </alternativeName>
</protein>
<comment type="function">
    <text evidence="1">This protein specifically catalyzes the removal of signal peptides from prolipoproteins.</text>
</comment>
<comment type="catalytic activity">
    <reaction evidence="1">
        <text>Release of signal peptides from bacterial membrane prolipoproteins. Hydrolyzes -Xaa-Yaa-Zaa-|-(S,diacylglyceryl)Cys-, in which Xaa is hydrophobic (preferably Leu), and Yaa (Ala or Ser) and Zaa (Gly or Ala) have small, neutral side chains.</text>
        <dbReference type="EC" id="3.4.23.36"/>
    </reaction>
</comment>
<comment type="pathway">
    <text evidence="1">Protein modification; lipoprotein biosynthesis (signal peptide cleavage).</text>
</comment>
<comment type="subcellular location">
    <subcellularLocation>
        <location evidence="1">Cell inner membrane</location>
        <topology evidence="1">Multi-pass membrane protein</topology>
    </subcellularLocation>
</comment>
<comment type="similarity">
    <text evidence="1">Belongs to the peptidase A8 family.</text>
</comment>
<dbReference type="EC" id="3.4.23.36" evidence="1"/>
<dbReference type="EMBL" id="AE017220">
    <property type="protein sequence ID" value="AAX63947.1"/>
    <property type="molecule type" value="Genomic_DNA"/>
</dbReference>
<dbReference type="RefSeq" id="WP_000042739.1">
    <property type="nucleotide sequence ID" value="NC_006905.1"/>
</dbReference>
<dbReference type="SMR" id="Q57TL4"/>
<dbReference type="MEROPS" id="A08.001"/>
<dbReference type="KEGG" id="sec:SCH_0041"/>
<dbReference type="HOGENOM" id="CLU_083252_4_0_6"/>
<dbReference type="UniPathway" id="UPA00665"/>
<dbReference type="Proteomes" id="UP000000538">
    <property type="component" value="Chromosome"/>
</dbReference>
<dbReference type="GO" id="GO:0005886">
    <property type="term" value="C:plasma membrane"/>
    <property type="evidence" value="ECO:0007669"/>
    <property type="project" value="UniProtKB-SubCell"/>
</dbReference>
<dbReference type="GO" id="GO:0004190">
    <property type="term" value="F:aspartic-type endopeptidase activity"/>
    <property type="evidence" value="ECO:0007669"/>
    <property type="project" value="UniProtKB-UniRule"/>
</dbReference>
<dbReference type="GO" id="GO:0006508">
    <property type="term" value="P:proteolysis"/>
    <property type="evidence" value="ECO:0007669"/>
    <property type="project" value="UniProtKB-KW"/>
</dbReference>
<dbReference type="HAMAP" id="MF_00161">
    <property type="entry name" value="LspA"/>
    <property type="match status" value="1"/>
</dbReference>
<dbReference type="InterPro" id="IPR001872">
    <property type="entry name" value="Peptidase_A8"/>
</dbReference>
<dbReference type="NCBIfam" id="TIGR00077">
    <property type="entry name" value="lspA"/>
    <property type="match status" value="1"/>
</dbReference>
<dbReference type="PANTHER" id="PTHR33695">
    <property type="entry name" value="LIPOPROTEIN SIGNAL PEPTIDASE"/>
    <property type="match status" value="1"/>
</dbReference>
<dbReference type="PANTHER" id="PTHR33695:SF1">
    <property type="entry name" value="LIPOPROTEIN SIGNAL PEPTIDASE"/>
    <property type="match status" value="1"/>
</dbReference>
<dbReference type="Pfam" id="PF01252">
    <property type="entry name" value="Peptidase_A8"/>
    <property type="match status" value="1"/>
</dbReference>
<dbReference type="PRINTS" id="PR00781">
    <property type="entry name" value="LIPOSIGPTASE"/>
</dbReference>
<dbReference type="PROSITE" id="PS00855">
    <property type="entry name" value="SPASE_II"/>
    <property type="match status" value="1"/>
</dbReference>
<feature type="chain" id="PRO_0000289418" description="Lipoprotein signal peptidase">
    <location>
        <begin position="1"/>
        <end position="166"/>
    </location>
</feature>
<feature type="transmembrane region" description="Helical" evidence="1">
    <location>
        <begin position="12"/>
        <end position="32"/>
    </location>
</feature>
<feature type="transmembrane region" description="Helical" evidence="1">
    <location>
        <begin position="70"/>
        <end position="90"/>
    </location>
</feature>
<feature type="transmembrane region" description="Helical" evidence="1">
    <location>
        <begin position="102"/>
        <end position="122"/>
    </location>
</feature>
<feature type="transmembrane region" description="Helical" evidence="1">
    <location>
        <begin position="137"/>
        <end position="157"/>
    </location>
</feature>
<feature type="active site" evidence="1">
    <location>
        <position position="123"/>
    </location>
</feature>
<feature type="active site" evidence="1">
    <location>
        <position position="141"/>
    </location>
</feature>
<sequence>MSKPLCSTGLRWLWLVVVVLIIDLGSKYLILQNFALGDTVGLFPSLNLHYARNYGAAFSFLADSGGWQRWFFAGIAIGICVILLVMMYRSKATQKLNNIAYALIIGGALGNLFDRLWHGFVVDMIDFYVGNWHFATFNLADSAICIGAALIVLEGFLPKPTAKEQA</sequence>
<name>LSPA_SALCH</name>